<organism>
    <name type="scientific">Streptococcus thermophilus (strain ATCC BAA-491 / LMD-9)</name>
    <dbReference type="NCBI Taxonomy" id="322159"/>
    <lineage>
        <taxon>Bacteria</taxon>
        <taxon>Bacillati</taxon>
        <taxon>Bacillota</taxon>
        <taxon>Bacilli</taxon>
        <taxon>Lactobacillales</taxon>
        <taxon>Streptococcaceae</taxon>
        <taxon>Streptococcus</taxon>
    </lineage>
</organism>
<protein>
    <recommendedName>
        <fullName evidence="1">ATP-dependent Clp protease ATP-binding subunit ClpX</fullName>
    </recommendedName>
</protein>
<sequence>MAGNRNEEMVYCSFCGKNQEEVKKIIAGNGVFICNECVALSQEIIREETAEEVLADLAETPKPKELLDILNNYVVGQDRVKRALAVAVYNHYKRINFTESREDNDVDLQKSNILMIGPTGSGKTYLAQTLARSLNVPFAIADATSLTEAGYVGEDVENILLKLIQAADFNIERAERGIIYVDEIDKIAKKGENVSITRDVSGEGVQQALLKIIEGTVASVPPQGGRKHPNQEMIQIDTKNILFIVGGAFDGIEDIVKQRLGEKIIGFGQNNKAIDDESSYMKEIVAEDIQKFGLIPEFIGRLPVLAALEQLTVDDLVRILTEPRNALVKQYQTLLSYDGVELEFDQDALEAIASKAIERKTGARGLRSIIEEVMMDVMFEIPSLEDVTKVRITKEAVDGKAAPVLETA</sequence>
<reference key="1">
    <citation type="journal article" date="2006" name="Proc. Natl. Acad. Sci. U.S.A.">
        <title>Comparative genomics of the lactic acid bacteria.</title>
        <authorList>
            <person name="Makarova K.S."/>
            <person name="Slesarev A."/>
            <person name="Wolf Y.I."/>
            <person name="Sorokin A."/>
            <person name="Mirkin B."/>
            <person name="Koonin E.V."/>
            <person name="Pavlov A."/>
            <person name="Pavlova N."/>
            <person name="Karamychev V."/>
            <person name="Polouchine N."/>
            <person name="Shakhova V."/>
            <person name="Grigoriev I."/>
            <person name="Lou Y."/>
            <person name="Rohksar D."/>
            <person name="Lucas S."/>
            <person name="Huang K."/>
            <person name="Goodstein D.M."/>
            <person name="Hawkins T."/>
            <person name="Plengvidhya V."/>
            <person name="Welker D."/>
            <person name="Hughes J."/>
            <person name="Goh Y."/>
            <person name="Benson A."/>
            <person name="Baldwin K."/>
            <person name="Lee J.-H."/>
            <person name="Diaz-Muniz I."/>
            <person name="Dosti B."/>
            <person name="Smeianov V."/>
            <person name="Wechter W."/>
            <person name="Barabote R."/>
            <person name="Lorca G."/>
            <person name="Altermann E."/>
            <person name="Barrangou R."/>
            <person name="Ganesan B."/>
            <person name="Xie Y."/>
            <person name="Rawsthorne H."/>
            <person name="Tamir D."/>
            <person name="Parker C."/>
            <person name="Breidt F."/>
            <person name="Broadbent J.R."/>
            <person name="Hutkins R."/>
            <person name="O'Sullivan D."/>
            <person name="Steele J."/>
            <person name="Unlu G."/>
            <person name="Saier M.H. Jr."/>
            <person name="Klaenhammer T."/>
            <person name="Richardson P."/>
            <person name="Kozyavkin S."/>
            <person name="Weimer B.C."/>
            <person name="Mills D.A."/>
        </authorList>
    </citation>
    <scope>NUCLEOTIDE SEQUENCE [LARGE SCALE GENOMIC DNA]</scope>
    <source>
        <strain>ATCC BAA-491 / LMD-9</strain>
    </source>
</reference>
<comment type="function">
    <text evidence="1">ATP-dependent specificity component of the Clp protease. It directs the protease to specific substrates. Can perform chaperone functions in the absence of ClpP.</text>
</comment>
<comment type="subunit">
    <text evidence="1">Component of the ClpX-ClpP complex. Forms a hexameric ring that, in the presence of ATP, binds to fourteen ClpP subunits assembled into a disk-like structure with a central cavity, resembling the structure of eukaryotic proteasomes.</text>
</comment>
<comment type="similarity">
    <text evidence="1">Belongs to the ClpX chaperone family.</text>
</comment>
<gene>
    <name evidence="1" type="primary">clpX</name>
    <name type="ordered locus">STER_0625</name>
</gene>
<keyword id="KW-0067">ATP-binding</keyword>
<keyword id="KW-0143">Chaperone</keyword>
<keyword id="KW-0479">Metal-binding</keyword>
<keyword id="KW-0547">Nucleotide-binding</keyword>
<keyword id="KW-0862">Zinc</keyword>
<name>CLPX_STRTD</name>
<feature type="chain" id="PRO_1000024687" description="ATP-dependent Clp protease ATP-binding subunit ClpX">
    <location>
        <begin position="1"/>
        <end position="408"/>
    </location>
</feature>
<feature type="domain" description="ClpX-type ZB" evidence="2">
    <location>
        <begin position="1"/>
        <end position="53"/>
    </location>
</feature>
<feature type="binding site" evidence="2">
    <location>
        <position position="12"/>
    </location>
    <ligand>
        <name>Zn(2+)</name>
        <dbReference type="ChEBI" id="CHEBI:29105"/>
    </ligand>
</feature>
<feature type="binding site" evidence="2">
    <location>
        <position position="15"/>
    </location>
    <ligand>
        <name>Zn(2+)</name>
        <dbReference type="ChEBI" id="CHEBI:29105"/>
    </ligand>
</feature>
<feature type="binding site" evidence="2">
    <location>
        <position position="34"/>
    </location>
    <ligand>
        <name>Zn(2+)</name>
        <dbReference type="ChEBI" id="CHEBI:29105"/>
    </ligand>
</feature>
<feature type="binding site" evidence="2">
    <location>
        <position position="37"/>
    </location>
    <ligand>
        <name>Zn(2+)</name>
        <dbReference type="ChEBI" id="CHEBI:29105"/>
    </ligand>
</feature>
<feature type="binding site" evidence="1">
    <location>
        <begin position="118"/>
        <end position="125"/>
    </location>
    <ligand>
        <name>ATP</name>
        <dbReference type="ChEBI" id="CHEBI:30616"/>
    </ligand>
</feature>
<accession>Q03LN0</accession>
<dbReference type="EMBL" id="CP000419">
    <property type="protein sequence ID" value="ABJ65892.1"/>
    <property type="molecule type" value="Genomic_DNA"/>
</dbReference>
<dbReference type="RefSeq" id="WP_011680904.1">
    <property type="nucleotide sequence ID" value="NC_008532.1"/>
</dbReference>
<dbReference type="SMR" id="Q03LN0"/>
<dbReference type="KEGG" id="ste:STER_0625"/>
<dbReference type="HOGENOM" id="CLU_014218_8_2_9"/>
<dbReference type="GO" id="GO:0009376">
    <property type="term" value="C:HslUV protease complex"/>
    <property type="evidence" value="ECO:0007669"/>
    <property type="project" value="TreeGrafter"/>
</dbReference>
<dbReference type="GO" id="GO:0005524">
    <property type="term" value="F:ATP binding"/>
    <property type="evidence" value="ECO:0007669"/>
    <property type="project" value="UniProtKB-UniRule"/>
</dbReference>
<dbReference type="GO" id="GO:0016887">
    <property type="term" value="F:ATP hydrolysis activity"/>
    <property type="evidence" value="ECO:0007669"/>
    <property type="project" value="InterPro"/>
</dbReference>
<dbReference type="GO" id="GO:0140662">
    <property type="term" value="F:ATP-dependent protein folding chaperone"/>
    <property type="evidence" value="ECO:0007669"/>
    <property type="project" value="InterPro"/>
</dbReference>
<dbReference type="GO" id="GO:0046983">
    <property type="term" value="F:protein dimerization activity"/>
    <property type="evidence" value="ECO:0007669"/>
    <property type="project" value="InterPro"/>
</dbReference>
<dbReference type="GO" id="GO:0051082">
    <property type="term" value="F:unfolded protein binding"/>
    <property type="evidence" value="ECO:0007669"/>
    <property type="project" value="UniProtKB-UniRule"/>
</dbReference>
<dbReference type="GO" id="GO:0008270">
    <property type="term" value="F:zinc ion binding"/>
    <property type="evidence" value="ECO:0007669"/>
    <property type="project" value="InterPro"/>
</dbReference>
<dbReference type="GO" id="GO:0051301">
    <property type="term" value="P:cell division"/>
    <property type="evidence" value="ECO:0007669"/>
    <property type="project" value="TreeGrafter"/>
</dbReference>
<dbReference type="GO" id="GO:0051603">
    <property type="term" value="P:proteolysis involved in protein catabolic process"/>
    <property type="evidence" value="ECO:0007669"/>
    <property type="project" value="TreeGrafter"/>
</dbReference>
<dbReference type="CDD" id="cd19497">
    <property type="entry name" value="RecA-like_ClpX"/>
    <property type="match status" value="1"/>
</dbReference>
<dbReference type="FunFam" id="1.10.8.60:FF:000002">
    <property type="entry name" value="ATP-dependent Clp protease ATP-binding subunit ClpX"/>
    <property type="match status" value="1"/>
</dbReference>
<dbReference type="FunFam" id="3.40.50.300:FF:000005">
    <property type="entry name" value="ATP-dependent Clp protease ATP-binding subunit ClpX"/>
    <property type="match status" value="1"/>
</dbReference>
<dbReference type="Gene3D" id="1.10.8.60">
    <property type="match status" value="1"/>
</dbReference>
<dbReference type="Gene3D" id="6.20.220.10">
    <property type="entry name" value="ClpX chaperone, C4-type zinc finger domain"/>
    <property type="match status" value="1"/>
</dbReference>
<dbReference type="Gene3D" id="3.40.50.300">
    <property type="entry name" value="P-loop containing nucleotide triphosphate hydrolases"/>
    <property type="match status" value="1"/>
</dbReference>
<dbReference type="HAMAP" id="MF_00175">
    <property type="entry name" value="ClpX"/>
    <property type="match status" value="1"/>
</dbReference>
<dbReference type="InterPro" id="IPR003593">
    <property type="entry name" value="AAA+_ATPase"/>
</dbReference>
<dbReference type="InterPro" id="IPR050052">
    <property type="entry name" value="ATP-dep_Clp_protease_ClpX"/>
</dbReference>
<dbReference type="InterPro" id="IPR003959">
    <property type="entry name" value="ATPase_AAA_core"/>
</dbReference>
<dbReference type="InterPro" id="IPR019489">
    <property type="entry name" value="Clp_ATPase_C"/>
</dbReference>
<dbReference type="InterPro" id="IPR004487">
    <property type="entry name" value="Clp_protease_ATP-bd_su_ClpX"/>
</dbReference>
<dbReference type="InterPro" id="IPR046425">
    <property type="entry name" value="ClpX_bact"/>
</dbReference>
<dbReference type="InterPro" id="IPR027417">
    <property type="entry name" value="P-loop_NTPase"/>
</dbReference>
<dbReference type="InterPro" id="IPR010603">
    <property type="entry name" value="Znf_CppX_C4"/>
</dbReference>
<dbReference type="InterPro" id="IPR038366">
    <property type="entry name" value="Znf_CppX_C4_sf"/>
</dbReference>
<dbReference type="NCBIfam" id="TIGR00382">
    <property type="entry name" value="clpX"/>
    <property type="match status" value="1"/>
</dbReference>
<dbReference type="NCBIfam" id="NF003745">
    <property type="entry name" value="PRK05342.1"/>
    <property type="match status" value="1"/>
</dbReference>
<dbReference type="PANTHER" id="PTHR48102:SF7">
    <property type="entry name" value="ATP-DEPENDENT CLP PROTEASE ATP-BINDING SUBUNIT CLPX-LIKE, MITOCHONDRIAL"/>
    <property type="match status" value="1"/>
</dbReference>
<dbReference type="PANTHER" id="PTHR48102">
    <property type="entry name" value="ATP-DEPENDENT CLP PROTEASE ATP-BINDING SUBUNIT CLPX-LIKE, MITOCHONDRIAL-RELATED"/>
    <property type="match status" value="1"/>
</dbReference>
<dbReference type="Pfam" id="PF07724">
    <property type="entry name" value="AAA_2"/>
    <property type="match status" value="1"/>
</dbReference>
<dbReference type="Pfam" id="PF10431">
    <property type="entry name" value="ClpB_D2-small"/>
    <property type="match status" value="1"/>
</dbReference>
<dbReference type="Pfam" id="PF06689">
    <property type="entry name" value="zf-C4_ClpX"/>
    <property type="match status" value="1"/>
</dbReference>
<dbReference type="SMART" id="SM00382">
    <property type="entry name" value="AAA"/>
    <property type="match status" value="1"/>
</dbReference>
<dbReference type="SMART" id="SM01086">
    <property type="entry name" value="ClpB_D2-small"/>
    <property type="match status" value="1"/>
</dbReference>
<dbReference type="SMART" id="SM00994">
    <property type="entry name" value="zf-C4_ClpX"/>
    <property type="match status" value="1"/>
</dbReference>
<dbReference type="SUPFAM" id="SSF57716">
    <property type="entry name" value="Glucocorticoid receptor-like (DNA-binding domain)"/>
    <property type="match status" value="1"/>
</dbReference>
<dbReference type="SUPFAM" id="SSF52540">
    <property type="entry name" value="P-loop containing nucleoside triphosphate hydrolases"/>
    <property type="match status" value="1"/>
</dbReference>
<dbReference type="PROSITE" id="PS51902">
    <property type="entry name" value="CLPX_ZB"/>
    <property type="match status" value="1"/>
</dbReference>
<proteinExistence type="inferred from homology"/>
<evidence type="ECO:0000255" key="1">
    <source>
        <dbReference type="HAMAP-Rule" id="MF_00175"/>
    </source>
</evidence>
<evidence type="ECO:0000255" key="2">
    <source>
        <dbReference type="PROSITE-ProRule" id="PRU01250"/>
    </source>
</evidence>